<reference key="1">
    <citation type="journal article" date="1987" name="Nucleic Acids Res.">
        <title>Mouse histone H2A and H2B genes: four functional genes and a pseudogene undergoing gene conversion with a closely linked functional gene.</title>
        <authorList>
            <person name="Liu T.-J."/>
            <person name="Liu L."/>
            <person name="Marzluff W.F."/>
        </authorList>
    </citation>
    <scope>NUCLEOTIDE SEQUENCE [GENOMIC DNA]</scope>
</reference>
<reference key="2">
    <citation type="journal article" date="2002" name="Genomics">
        <title>The human and mouse replication-dependent histone genes.</title>
        <authorList>
            <person name="Marzluff W.F."/>
            <person name="Gongidi P."/>
            <person name="Woods K.R."/>
            <person name="Jin J."/>
            <person name="Maltais L.J."/>
        </authorList>
    </citation>
    <scope>NUCLEOTIDE SEQUENCE [GENOMIC DNA]</scope>
</reference>
<reference key="3">
    <citation type="journal article" date="2009" name="PLoS Biol.">
        <title>Lineage-specific biology revealed by a finished genome assembly of the mouse.</title>
        <authorList>
            <person name="Church D.M."/>
            <person name="Goodstadt L."/>
            <person name="Hillier L.W."/>
            <person name="Zody M.C."/>
            <person name="Goldstein S."/>
            <person name="She X."/>
            <person name="Bult C.J."/>
            <person name="Agarwala R."/>
            <person name="Cherry J.L."/>
            <person name="DiCuccio M."/>
            <person name="Hlavina W."/>
            <person name="Kapustin Y."/>
            <person name="Meric P."/>
            <person name="Maglott D."/>
            <person name="Birtle Z."/>
            <person name="Marques A.C."/>
            <person name="Graves T."/>
            <person name="Zhou S."/>
            <person name="Teague B."/>
            <person name="Potamousis K."/>
            <person name="Churas C."/>
            <person name="Place M."/>
            <person name="Herschleb J."/>
            <person name="Runnheim R."/>
            <person name="Forrest D."/>
            <person name="Amos-Landgraf J."/>
            <person name="Schwartz D.C."/>
            <person name="Cheng Z."/>
            <person name="Lindblad-Toh K."/>
            <person name="Eichler E.E."/>
            <person name="Ponting C.P."/>
        </authorList>
    </citation>
    <scope>NUCLEOTIDE SEQUENCE [LARGE SCALE GENOMIC DNA]</scope>
    <source>
        <strain>C57BL/6J</strain>
    </source>
</reference>
<reference key="4">
    <citation type="journal article" date="2004" name="Genome Res.">
        <title>The status, quality, and expansion of the NIH full-length cDNA project: the Mammalian Gene Collection (MGC).</title>
        <authorList>
            <consortium name="The MGC Project Team"/>
        </authorList>
    </citation>
    <scope>NUCLEOTIDE SEQUENCE [LARGE SCALE MRNA]</scope>
    <source>
        <strain evidence="14">C57BL/6J</strain>
        <tissue evidence="14">Placenta</tissue>
    </source>
</reference>
<reference key="5">
    <citation type="journal article" date="1981" name="J. Biol. Chem.">
        <title>Quantitative determination of histone modification. H2A acetylation and phosphorylation.</title>
        <authorList>
            <person name="Pantazis P."/>
            <person name="Bonner W.M."/>
        </authorList>
    </citation>
    <scope>PHOSPHORYLATION AT SER-2</scope>
    <scope>ACETYLATION AT SER-2 AND LYS-6</scope>
</reference>
<reference key="6">
    <citation type="journal article" date="2004" name="Dev. Cell">
        <title>Polycomb group proteins Ring1A/B link ubiquitylation of histone H2A to heritable gene silencing and X inactivation.</title>
        <authorList>
            <person name="de Napoles M."/>
            <person name="Mermoud J.E."/>
            <person name="Wakao R."/>
            <person name="Tang Y.A."/>
            <person name="Endoh M."/>
            <person name="Appanah R."/>
            <person name="Nesterova T.B."/>
            <person name="Silva J."/>
            <person name="Otte A.P."/>
            <person name="Vidal M."/>
            <person name="Koseki H."/>
            <person name="Brockdorff N."/>
        </authorList>
    </citation>
    <scope>UBIQUITINATION AT LYS-120</scope>
</reference>
<reference key="7">
    <citation type="journal article" date="2004" name="J. Biol. Chem.">
        <title>Ring1b-mediated H2A ubiquitination associates with inactive X chromosomes and is involved in initiation of X inactivation.</title>
        <authorList>
            <person name="Fang J."/>
            <person name="Chen T."/>
            <person name="Chadwick B."/>
            <person name="Li E."/>
            <person name="Zhang Y."/>
        </authorList>
    </citation>
    <scope>UBIQUITINATION AT LYS-120</scope>
</reference>
<reference key="8">
    <citation type="journal article" date="2006" name="Nat. Cell Biol.">
        <title>Blimp1 associates with Prmt5 and directs histone arginine methylation in mouse germ cells.</title>
        <authorList>
            <person name="Ancelin K."/>
            <person name="Lange U.C."/>
            <person name="Hajkova P."/>
            <person name="Schneider R."/>
            <person name="Bannister A.J."/>
            <person name="Kouzarides T."/>
            <person name="Surani M.A."/>
        </authorList>
    </citation>
    <scope>METHYLATION AT ARG-4</scope>
</reference>
<reference key="9">
    <citation type="journal article" date="2011" name="Cell">
        <title>Identification of 67 histone marks and histone lysine crotonylation as a new type of histone modification.</title>
        <authorList>
            <person name="Tan M."/>
            <person name="Luo H."/>
            <person name="Lee S."/>
            <person name="Jin F."/>
            <person name="Yang J.S."/>
            <person name="Montellier E."/>
            <person name="Buchou T."/>
            <person name="Cheng Z."/>
            <person name="Rousseaux S."/>
            <person name="Rajagopal N."/>
            <person name="Lu Z."/>
            <person name="Ye Z."/>
            <person name="Zhu Q."/>
            <person name="Wysocka J."/>
            <person name="Ye Y."/>
            <person name="Khochbin S."/>
            <person name="Ren B."/>
            <person name="Zhao Y."/>
        </authorList>
    </citation>
    <scope>CROTONYLATION AT LYS-37 AND LYS-119</scope>
</reference>
<reference key="10">
    <citation type="journal article" date="2014" name="Nat. Chem. Biol.">
        <title>Lysine 2-hydroxyisobutyrylation is a widely distributed active histone mark.</title>
        <authorList>
            <person name="Dai L."/>
            <person name="Peng C."/>
            <person name="Montellier E."/>
            <person name="Lu Z."/>
            <person name="Chen Y."/>
            <person name="Ishii H."/>
            <person name="Debernardi A."/>
            <person name="Buchou T."/>
            <person name="Rousseaux S."/>
            <person name="Jin F."/>
            <person name="Sabari B.R."/>
            <person name="Deng Z."/>
            <person name="Allis C.D."/>
            <person name="Ren B."/>
            <person name="Khochbin S."/>
            <person name="Zhao Y."/>
        </authorList>
    </citation>
    <scope>HYDROXYBUTYRYLATION AT LYS-6; LYS-10; LYS-37; LYS-75; LYS-76; LYS-96 AND LYS-119</scope>
</reference>
<reference key="11">
    <citation type="journal article" date="2014" name="Nature">
        <title>Glutamine methylation in histone H2A is an RNA-polymerase-I-dedicated modification.</title>
        <authorList>
            <person name="Tessarz P."/>
            <person name="Santos-Rosa H."/>
            <person name="Robson S.C."/>
            <person name="Sylvestersen K.B."/>
            <person name="Nelson C.J."/>
            <person name="Nielsen M.L."/>
            <person name="Kouzarides T."/>
        </authorList>
    </citation>
    <scope>METHYLATION AT GLN-105</scope>
</reference>
<reference key="12">
    <citation type="journal article" date="2016" name="Mol. Cell">
        <title>Metabolic regulation of gene expression by histone lysine beta-hydroxybutyrylation.</title>
        <authorList>
            <person name="Xie Z."/>
            <person name="Zhang D."/>
            <person name="Chung D."/>
            <person name="Tang Z."/>
            <person name="Huang H."/>
            <person name="Dai L."/>
            <person name="Qi S."/>
            <person name="Li J."/>
            <person name="Colak G."/>
            <person name="Chen Y."/>
            <person name="Xia C."/>
            <person name="Peng C."/>
            <person name="Ruan H."/>
            <person name="Kirkey M."/>
            <person name="Wang D."/>
            <person name="Jensen L.M."/>
            <person name="Kwon O.K."/>
            <person name="Lee S."/>
            <person name="Pletcher S.D."/>
            <person name="Tan M."/>
            <person name="Lombard D.B."/>
            <person name="White K.P."/>
            <person name="Zhao H."/>
            <person name="Li J."/>
            <person name="Roeder R.G."/>
            <person name="Yang X."/>
            <person name="Zhao Y."/>
        </authorList>
    </citation>
    <scope>HYDROXYBUTYRYLATION AT LYS-6; LYS-37; LYS-120 AND LYS-126</scope>
</reference>
<comment type="function">
    <text>Core component of nucleosome. Nucleosomes wrap and compact DNA into chromatin, limiting DNA accessibility to the cellular machineries which require DNA as a template. Histones thereby play a central role in transcription regulation, DNA repair, DNA replication and chromosomal stability. DNA accessibility is regulated via a complex set of post-translational modifications of histones, also called histone code, and nucleosome remodeling.</text>
</comment>
<comment type="subunit">
    <text>The nucleosome is a histone octamer containing two molecules each of H2A, H2B, H3 and H4 assembled in one H3-H4 heterotetramer and two H2A-H2B heterodimers. The octamer wraps approximately 147 bp of DNA.</text>
</comment>
<comment type="subcellular location">
    <subcellularLocation>
        <location>Nucleus</location>
    </subcellularLocation>
    <subcellularLocation>
        <location>Chromosome</location>
    </subcellularLocation>
</comment>
<comment type="PTM">
    <text evidence="3">Deiminated on Arg-4 in granulocytes upon calcium entry.</text>
</comment>
<comment type="PTM">
    <text evidence="3 5 6 9">Monoubiquitination of Lys-120 (H2AK119Ub) by RING1, TRIM37 and RNF2/RING2 complex gives a specific tag for epigenetic transcriptional repression and participates in X chromosome inactivation of female mammals. It is involved in the initiation of both imprinted and random X inactivation. Ubiquitinated H2A is enriched in inactive X chromosome chromatin. Ubiquitination of H2A functions downstream of methylation of 'Lys-27' of histone H3 (H3K27me). H2AK119Ub by RNF2/RING2 can also be induced by ultraviolet and may be involved in DNA repair. Following DNA double-strand breaks (DSBs), it is ubiquitinated through 'Lys-63' linkage of ubiquitin moieties by the E2 ligase UBE2N and the E3 ligases RNF8 and RNF168, leading to the recruitment of repair proteins to sites of DNA damage. Ubiquitination at Lys-14 and Lys-16 (H2AK13Ub and H2AK15Ub, respectively) in response to DNA damage is initiated by RNF168 that mediates monoubiquitination at these 2 sites, and 'Lys-63'-linked ubiquitin are then conjugated to monoubiquitin; RNF8 is able to extend 'Lys-63'-linked ubiquitin chains in vitro. Deubiquitinated by USP51 at Lys-14 and Lys-16 (H2AK13Ub and H2AK15Ub, respectively) after damaged DNA is repaired (By similarity). H2AK119Ub and ionizing radiation-induced 'Lys-63'-linked ubiquitination (H2AK13Ub and H2AK15Ub) are distinct events.</text>
</comment>
<comment type="PTM">
    <text evidence="3 12">Phosphorylation on Ser-2 (H2AS1ph) is enhanced during mitosis. Phosphorylation on Ser-2 by RPS6KA5/MSK1 directly represses transcription. Acetylation of H3 inhibits Ser-2 phosphorylation by RPS6KA5/MSK1. Phosphorylation at Thr-121 (H2AT120ph) by DCAF1 is present in the regulatory region of many tumor suppresor genes and down-regulates their transcription.</text>
</comment>
<comment type="PTM">
    <text evidence="7">Symmetric dimethylation on Arg-4 by the PRDM1/PRMT5 complex may play a crucial role in the germ-cell lineage.</text>
</comment>
<comment type="PTM">
    <text evidence="9">Glutamine methylation at Gln-105 (H2AQ104me) by FBL is specifically dedicated to polymerase I. It is present at 35S ribosomal DNA locus and impairs binding of the FACT complex.</text>
</comment>
<comment type="PTM">
    <text evidence="8">Crotonylation (Kcr) is specifically present in male germ cells and marks testis-specific genes in post-meiotic cells, including X-linked genes that escape sex chromosome inactivation in haploid cells. Crotonylation marks active promoters and enhancers and confers resistance to transcriptional repressors. It is also associated with post-meiotically activated genes on autosomes.</text>
</comment>
<comment type="PTM">
    <text evidence="11">Hydroxybutyrylation of histones is induced by starvation.</text>
</comment>
<comment type="PTM">
    <text evidence="2">Lactylated in macrophages by EP300/P300 by using lactoyl-CoA directly derived from endogenous or exogenous lactate, leading to stimulates gene transcription.</text>
</comment>
<comment type="similarity">
    <text evidence="13">Belongs to the histone H2A family.</text>
</comment>
<comment type="sequence caution" evidence="13">
    <conflict type="miscellaneous discrepancy">
        <sequence resource="EMBL-CDS" id="CAA29291"/>
    </conflict>
    <text>Several sequencing errors.</text>
</comment>
<sequence length="130" mass="14135">MSGRGKQGGKARAKAKTRSSRAGLQFPVGRVHRLLRKGNYSERVGAGAPVYLAAVLEYLTAEILELAGNAARDNKKTRIIPRHLQLAIRNDEELNKLLGRVTIAQGGVLPNIQAVLLPKKTESHHKAKGK</sequence>
<proteinExistence type="evidence at protein level"/>
<name>H2A1I_MOUSE</name>
<evidence type="ECO:0000250" key="1">
    <source>
        <dbReference type="UniProtKB" id="P04908"/>
    </source>
</evidence>
<evidence type="ECO:0000250" key="2">
    <source>
        <dbReference type="UniProtKB" id="P0C0S5"/>
    </source>
</evidence>
<evidence type="ECO:0000250" key="3">
    <source>
        <dbReference type="UniProtKB" id="P0C0S8"/>
    </source>
</evidence>
<evidence type="ECO:0000256" key="4">
    <source>
        <dbReference type="SAM" id="MobiDB-lite"/>
    </source>
</evidence>
<evidence type="ECO:0000269" key="5">
    <source>
    </source>
</evidence>
<evidence type="ECO:0000269" key="6">
    <source>
    </source>
</evidence>
<evidence type="ECO:0000269" key="7">
    <source>
    </source>
</evidence>
<evidence type="ECO:0000269" key="8">
    <source>
    </source>
</evidence>
<evidence type="ECO:0000269" key="9">
    <source>
    </source>
</evidence>
<evidence type="ECO:0000269" key="10">
    <source>
    </source>
</evidence>
<evidence type="ECO:0000269" key="11">
    <source>
    </source>
</evidence>
<evidence type="ECO:0000269" key="12">
    <source>
    </source>
</evidence>
<evidence type="ECO:0000305" key="13"/>
<evidence type="ECO:0000312" key="14">
    <source>
        <dbReference type="EMBL" id="AAH99406.1"/>
    </source>
</evidence>
<evidence type="ECO:0000312" key="15">
    <source>
        <dbReference type="MGI" id="MGI:2448457"/>
    </source>
</evidence>
<gene>
    <name evidence="15" type="primary">H2ac13</name>
    <name evidence="15" type="synonym">Hist1h2ai</name>
</gene>
<organism>
    <name type="scientific">Mus musculus</name>
    <name type="common">Mouse</name>
    <dbReference type="NCBI Taxonomy" id="10090"/>
    <lineage>
        <taxon>Eukaryota</taxon>
        <taxon>Metazoa</taxon>
        <taxon>Chordata</taxon>
        <taxon>Craniata</taxon>
        <taxon>Vertebrata</taxon>
        <taxon>Euteleostomi</taxon>
        <taxon>Mammalia</taxon>
        <taxon>Eutheria</taxon>
        <taxon>Euarchontoglires</taxon>
        <taxon>Glires</taxon>
        <taxon>Rodentia</taxon>
        <taxon>Myomorpha</taxon>
        <taxon>Muroidea</taxon>
        <taxon>Muridae</taxon>
        <taxon>Murinae</taxon>
        <taxon>Mus</taxon>
        <taxon>Mus</taxon>
    </lineage>
</organism>
<dbReference type="EMBL" id="X05862">
    <property type="protein sequence ID" value="CAA29291.1"/>
    <property type="status" value="ALT_SEQ"/>
    <property type="molecule type" value="Genomic_DNA"/>
</dbReference>
<dbReference type="EMBL" id="AY158909">
    <property type="protein sequence ID" value="AAO06220.1"/>
    <property type="molecule type" value="Genomic_DNA"/>
</dbReference>
<dbReference type="EMBL" id="AL589651">
    <property type="status" value="NOT_ANNOTATED_CDS"/>
    <property type="molecule type" value="Genomic_DNA"/>
</dbReference>
<dbReference type="EMBL" id="BC099406">
    <property type="protein sequence ID" value="AAH99406.1"/>
    <property type="molecule type" value="mRNA"/>
</dbReference>
<dbReference type="EMBL" id="BC116373">
    <property type="protein sequence ID" value="AAI16374.1"/>
    <property type="molecule type" value="mRNA"/>
</dbReference>
<dbReference type="EMBL" id="BC127164">
    <property type="protein sequence ID" value="AAI27165.1"/>
    <property type="molecule type" value="mRNA"/>
</dbReference>
<dbReference type="CCDS" id="CCDS26288.1"/>
<dbReference type="PIR" id="S04152">
    <property type="entry name" value="S04152"/>
</dbReference>
<dbReference type="RefSeq" id="NP_835489.1">
    <property type="nucleotide sequence ID" value="NM_178182.2"/>
</dbReference>
<dbReference type="SMR" id="C0HKE6"/>
<dbReference type="FunCoup" id="C0HKE6">
    <property type="interactions" value="831"/>
</dbReference>
<dbReference type="iPTMnet" id="C0HKE6"/>
<dbReference type="jPOST" id="C0HKE6"/>
<dbReference type="Pumba" id="C0HKE6"/>
<dbReference type="Antibodypedia" id="72464">
    <property type="antibodies" value="208 antibodies from 18 providers"/>
</dbReference>
<dbReference type="DNASU" id="319172"/>
<dbReference type="Ensembl" id="ENSMUST00000070124.5">
    <property type="protein sequence ID" value="ENSMUSP00000088285.3"/>
    <property type="gene ID" value="ENSMUSG00000071516.3"/>
</dbReference>
<dbReference type="Ensembl" id="ENSMUST00000078369.3">
    <property type="protein sequence ID" value="ENSMUSP00000077477.2"/>
    <property type="gene ID" value="ENSMUSG00000061615.3"/>
</dbReference>
<dbReference type="Ensembl" id="ENSMUST00000081342.7">
    <property type="protein sequence ID" value="ENSMUSP00000080088.6"/>
    <property type="gene ID" value="ENSMUSG00000094777.3"/>
</dbReference>
<dbReference type="Ensembl" id="ENSMUST00000090776.7">
    <property type="protein sequence ID" value="ENSMUSP00000088281.5"/>
    <property type="gene ID" value="ENSMUSG00000071478.7"/>
</dbReference>
<dbReference type="Ensembl" id="ENSMUST00000091741.6">
    <property type="protein sequence ID" value="ENSMUSP00000089335.5"/>
    <property type="gene ID" value="ENSMUSG00000069301.6"/>
</dbReference>
<dbReference type="Ensembl" id="ENSMUST00000091745.6">
    <property type="protein sequence ID" value="ENSMUSP00000089339.6"/>
    <property type="gene ID" value="ENSMUSG00000094248.2"/>
</dbReference>
<dbReference type="Ensembl" id="ENSMUST00000091751.3">
    <property type="protein sequence ID" value="ENSMUSP00000089345.3"/>
    <property type="gene ID" value="ENSMUSG00000069309.3"/>
</dbReference>
<dbReference type="Ensembl" id="ENSMUST00000102969.6">
    <property type="protein sequence ID" value="ENSMUSP00000100034.4"/>
    <property type="gene ID" value="ENSMUSG00000069272.7"/>
</dbReference>
<dbReference type="Ensembl" id="ENSMUST00000171127.4">
    <property type="protein sequence ID" value="ENSMUSP00000127684.2"/>
    <property type="gene ID" value="ENSMUSG00000069270.7"/>
</dbReference>
<dbReference type="GeneID" id="319191"/>
<dbReference type="KEGG" id="mmu:319164"/>
<dbReference type="KEGG" id="mmu:319165"/>
<dbReference type="KEGG" id="mmu:319166"/>
<dbReference type="KEGG" id="mmu:319167"/>
<dbReference type="KEGG" id="mmu:319170"/>
<dbReference type="KEGG" id="mmu:319171"/>
<dbReference type="KEGG" id="mmu:319172"/>
<dbReference type="KEGG" id="mmu:319191"/>
<dbReference type="KEGG" id="mmu:665433"/>
<dbReference type="AGR" id="MGI:2448457"/>
<dbReference type="CTD" id="3012"/>
<dbReference type="CTD" id="3013"/>
<dbReference type="CTD" id="319170"/>
<dbReference type="CTD" id="319171"/>
<dbReference type="CTD" id="665433"/>
<dbReference type="CTD" id="8329"/>
<dbReference type="CTD" id="8334"/>
<dbReference type="CTD" id="8335"/>
<dbReference type="CTD" id="8969"/>
<dbReference type="MGI" id="MGI:2448457">
    <property type="gene designation" value="H2ac13"/>
</dbReference>
<dbReference type="VEuPathDB" id="HostDB:ENSMUSG00000061615"/>
<dbReference type="VEuPathDB" id="HostDB:ENSMUSG00000069270"/>
<dbReference type="VEuPathDB" id="HostDB:ENSMUSG00000069272"/>
<dbReference type="VEuPathDB" id="HostDB:ENSMUSG00000069301"/>
<dbReference type="VEuPathDB" id="HostDB:ENSMUSG00000069309"/>
<dbReference type="VEuPathDB" id="HostDB:ENSMUSG00000071478"/>
<dbReference type="VEuPathDB" id="HostDB:ENSMUSG00000071516"/>
<dbReference type="VEuPathDB" id="HostDB:ENSMUSG00000094248"/>
<dbReference type="VEuPathDB" id="HostDB:ENSMUSG00000094777"/>
<dbReference type="InParanoid" id="C0HKE6"/>
<dbReference type="OMA" id="TEDCRQT"/>
<dbReference type="OrthoDB" id="9610409at2759"/>
<dbReference type="Reactome" id="R-MMU-110330">
    <property type="pathway name" value="Recognition and association of DNA glycosylase with site containing an affected purine"/>
</dbReference>
<dbReference type="Reactome" id="R-MMU-110331">
    <property type="pathway name" value="Cleavage of the damaged purine"/>
</dbReference>
<dbReference type="Reactome" id="R-MMU-212300">
    <property type="pathway name" value="PRC2 methylates histones and DNA"/>
</dbReference>
<dbReference type="Reactome" id="R-MMU-2299718">
    <property type="pathway name" value="Condensation of Prophase Chromosomes"/>
</dbReference>
<dbReference type="Reactome" id="R-MMU-2559586">
    <property type="pathway name" value="DNA Damage/Telomere Stress Induced Senescence"/>
</dbReference>
<dbReference type="Reactome" id="R-MMU-3214815">
    <property type="pathway name" value="HDACs deacetylate histones"/>
</dbReference>
<dbReference type="Reactome" id="R-MMU-3214858">
    <property type="pathway name" value="RMTs methylate histone arginines"/>
</dbReference>
<dbReference type="Reactome" id="R-MMU-5689603">
    <property type="pathway name" value="UCH proteinases"/>
</dbReference>
<dbReference type="Reactome" id="R-MMU-5689880">
    <property type="pathway name" value="Ub-specific processing proteases"/>
</dbReference>
<dbReference type="Reactome" id="R-MMU-5689901">
    <property type="pathway name" value="Metalloprotease DUBs"/>
</dbReference>
<dbReference type="Reactome" id="R-MMU-606279">
    <property type="pathway name" value="Deposition of new CENPA-containing nucleosomes at the centromere"/>
</dbReference>
<dbReference type="Reactome" id="R-MMU-8936459">
    <property type="pathway name" value="RUNX1 regulates genes involved in megakaryocyte differentiation and platelet function"/>
</dbReference>
<dbReference type="Reactome" id="R-MMU-9670095">
    <property type="pathway name" value="Inhibition of DNA recombination at telomere"/>
</dbReference>
<dbReference type="Reactome" id="R-MMU-9841922">
    <property type="pathway name" value="MLL4 and MLL3 complexes regulate expression of PPARG target genes in adipogenesis and hepatic steatosis"/>
</dbReference>
<dbReference type="Reactome" id="R-MMU-9843940">
    <property type="pathway name" value="Regulation of endogenous retroelements by KRAB-ZFP proteins"/>
</dbReference>
<dbReference type="BioGRID-ORCS" id="319164">
    <property type="hits" value="12 hits in 61 CRISPR screens"/>
</dbReference>
<dbReference type="BioGRID-ORCS" id="319165">
    <property type="hits" value="11 hits in 41 CRISPR screens"/>
</dbReference>
<dbReference type="BioGRID-ORCS" id="319166">
    <property type="hits" value="13 hits in 57 CRISPR screens"/>
</dbReference>
<dbReference type="BioGRID-ORCS" id="319167">
    <property type="hits" value="12 hits in 44 CRISPR screens"/>
</dbReference>
<dbReference type="BioGRID-ORCS" id="319170">
    <property type="hits" value="14 hits in 59 CRISPR screens"/>
</dbReference>
<dbReference type="BioGRID-ORCS" id="319171">
    <property type="hits" value="14 hits in 43 CRISPR screens"/>
</dbReference>
<dbReference type="BioGRID-ORCS" id="319172">
    <property type="hits" value="9 hits in 57 CRISPR screens"/>
</dbReference>
<dbReference type="BioGRID-ORCS" id="319191">
    <property type="hits" value="10 hits in 58 CRISPR screens"/>
</dbReference>
<dbReference type="BioGRID-ORCS" id="665433">
    <property type="hits" value="10 hits in 42 CRISPR screens"/>
</dbReference>
<dbReference type="ChiTaRS" id="Hist1h2ai">
    <property type="organism name" value="mouse"/>
</dbReference>
<dbReference type="PRO" id="PR:C0HKE6"/>
<dbReference type="Proteomes" id="UP000000589">
    <property type="component" value="Chromosome 13"/>
</dbReference>
<dbReference type="RNAct" id="C0HKE6">
    <property type="molecule type" value="protein"/>
</dbReference>
<dbReference type="Bgee" id="ENSMUSG00000061615">
    <property type="expression patterns" value="Expressed in uterus and 49 other cell types or tissues"/>
</dbReference>
<dbReference type="ExpressionAtlas" id="C0HKE6">
    <property type="expression patterns" value="baseline and differential"/>
</dbReference>
<dbReference type="GO" id="GO:0000786">
    <property type="term" value="C:nucleosome"/>
    <property type="evidence" value="ECO:0007669"/>
    <property type="project" value="UniProtKB-KW"/>
</dbReference>
<dbReference type="GO" id="GO:0005634">
    <property type="term" value="C:nucleus"/>
    <property type="evidence" value="ECO:0007669"/>
    <property type="project" value="UniProtKB-SubCell"/>
</dbReference>
<dbReference type="GO" id="GO:0003677">
    <property type="term" value="F:DNA binding"/>
    <property type="evidence" value="ECO:0007669"/>
    <property type="project" value="UniProtKB-KW"/>
</dbReference>
<dbReference type="GO" id="GO:0046982">
    <property type="term" value="F:protein heterodimerization activity"/>
    <property type="evidence" value="ECO:0007669"/>
    <property type="project" value="InterPro"/>
</dbReference>
<dbReference type="GO" id="GO:0030527">
    <property type="term" value="F:structural constituent of chromatin"/>
    <property type="evidence" value="ECO:0007669"/>
    <property type="project" value="InterPro"/>
</dbReference>
<dbReference type="CDD" id="cd00074">
    <property type="entry name" value="HFD_H2A"/>
    <property type="match status" value="1"/>
</dbReference>
<dbReference type="FunFam" id="1.10.20.10:FF:000103">
    <property type="entry name" value="Histone H2A type 1"/>
    <property type="match status" value="1"/>
</dbReference>
<dbReference type="Gene3D" id="1.10.20.10">
    <property type="entry name" value="Histone, subunit A"/>
    <property type="match status" value="1"/>
</dbReference>
<dbReference type="InterPro" id="IPR009072">
    <property type="entry name" value="Histone-fold"/>
</dbReference>
<dbReference type="InterPro" id="IPR002119">
    <property type="entry name" value="Histone_H2A"/>
</dbReference>
<dbReference type="InterPro" id="IPR007125">
    <property type="entry name" value="Histone_H2A/H2B/H3"/>
</dbReference>
<dbReference type="InterPro" id="IPR032454">
    <property type="entry name" value="Histone_H2A_C"/>
</dbReference>
<dbReference type="InterPro" id="IPR032458">
    <property type="entry name" value="Histone_H2A_CS"/>
</dbReference>
<dbReference type="PANTHER" id="PTHR23430">
    <property type="entry name" value="HISTONE H2A"/>
    <property type="match status" value="1"/>
</dbReference>
<dbReference type="Pfam" id="PF00125">
    <property type="entry name" value="Histone"/>
    <property type="match status" value="1"/>
</dbReference>
<dbReference type="Pfam" id="PF16211">
    <property type="entry name" value="Histone_H2A_C"/>
    <property type="match status" value="1"/>
</dbReference>
<dbReference type="PRINTS" id="PR00620">
    <property type="entry name" value="HISTONEH2A"/>
</dbReference>
<dbReference type="SMART" id="SM00414">
    <property type="entry name" value="H2A"/>
    <property type="match status" value="1"/>
</dbReference>
<dbReference type="SUPFAM" id="SSF47113">
    <property type="entry name" value="Histone-fold"/>
    <property type="match status" value="1"/>
</dbReference>
<dbReference type="PROSITE" id="PS00046">
    <property type="entry name" value="HISTONE_H2A"/>
    <property type="match status" value="1"/>
</dbReference>
<keyword id="KW-0007">Acetylation</keyword>
<keyword id="KW-0158">Chromosome</keyword>
<keyword id="KW-0164">Citrullination</keyword>
<keyword id="KW-0238">DNA-binding</keyword>
<keyword id="KW-0379">Hydroxylation</keyword>
<keyword id="KW-1017">Isopeptide bond</keyword>
<keyword id="KW-0488">Methylation</keyword>
<keyword id="KW-0544">Nucleosome core</keyword>
<keyword id="KW-0539">Nucleus</keyword>
<keyword id="KW-0597">Phosphoprotein</keyword>
<keyword id="KW-1185">Reference proteome</keyword>
<keyword id="KW-0832">Ubl conjugation</keyword>
<accession>C0HKE6</accession>
<accession>P10812</accession>
<accession>P22752</accession>
<accession>Q149U0</accession>
<accession>Q5SZZ2</accession>
<protein>
    <recommendedName>
        <fullName evidence="13">Histone H2A type 1-I</fullName>
    </recommendedName>
</protein>
<feature type="initiator methionine" description="Removed" evidence="1">
    <location>
        <position position="1"/>
    </location>
</feature>
<feature type="chain" id="PRO_0000439720" description="Histone H2A type 1-I">
    <location>
        <begin position="2"/>
        <end position="130"/>
    </location>
</feature>
<feature type="region of interest" description="Disordered" evidence="4">
    <location>
        <begin position="1"/>
        <end position="22"/>
    </location>
</feature>
<feature type="compositionally biased region" description="Basic residues" evidence="4">
    <location>
        <begin position="7"/>
        <end position="19"/>
    </location>
</feature>
<feature type="modified residue" description="N-acetylserine" evidence="12">
    <location>
        <position position="2"/>
    </location>
</feature>
<feature type="modified residue" description="Phosphoserine; by RPS6KA5" evidence="12">
    <location>
        <position position="2"/>
    </location>
</feature>
<feature type="modified residue" description="Citrulline; alternate" evidence="3">
    <location>
        <position position="4"/>
    </location>
</feature>
<feature type="modified residue" description="Symmetric dimethylarginine; by PRMT5; alternate" evidence="7">
    <location>
        <position position="4"/>
    </location>
</feature>
<feature type="modified residue" description="N6-(2-hydroxyisobutyryl)lysine; alternate" evidence="10">
    <location>
        <position position="6"/>
    </location>
</feature>
<feature type="modified residue" description="N6-(beta-hydroxybutyryl)lysine; alternate" evidence="11">
    <location>
        <position position="6"/>
    </location>
</feature>
<feature type="modified residue" description="N6-acetyllysine; alternate" evidence="12">
    <location>
        <position position="6"/>
    </location>
</feature>
<feature type="modified residue" description="N6-(2-hydroxyisobutyryl)lysine; alternate" evidence="10">
    <location>
        <position position="10"/>
    </location>
</feature>
<feature type="modified residue" description="N6-lactoyllysine; alternate" evidence="2">
    <location>
        <position position="10"/>
    </location>
</feature>
<feature type="modified residue" description="N6-succinyllysine; alternate" evidence="1">
    <location>
        <position position="10"/>
    </location>
</feature>
<feature type="modified residue" description="N6-(2-hydroxyisobutyryl)lysine; alternate" evidence="10">
    <location>
        <position position="37"/>
    </location>
</feature>
<feature type="modified residue" description="N6-(beta-hydroxybutyryl)lysine; alternate" evidence="11">
    <location>
        <position position="37"/>
    </location>
</feature>
<feature type="modified residue" description="N6-crotonyllysine; alternate" evidence="8">
    <location>
        <position position="37"/>
    </location>
</feature>
<feature type="modified residue" description="N6-(2-hydroxyisobutyryl)lysine" evidence="10">
    <location>
        <position position="75"/>
    </location>
</feature>
<feature type="modified residue" description="N6-(2-hydroxyisobutyryl)lysine" evidence="10">
    <location>
        <position position="76"/>
    </location>
</feature>
<feature type="modified residue" description="N6-(2-hydroxyisobutyryl)lysine; alternate" evidence="10">
    <location>
        <position position="96"/>
    </location>
</feature>
<feature type="modified residue" description="N6-glutaryllysine; alternate" evidence="3">
    <location>
        <position position="96"/>
    </location>
</feature>
<feature type="modified residue" description="N6-succinyllysine; alternate" evidence="1">
    <location>
        <position position="96"/>
    </location>
</feature>
<feature type="modified residue" description="N5-methylglutamine" evidence="9">
    <location>
        <position position="105"/>
    </location>
</feature>
<feature type="modified residue" description="N6-(2-hydroxyisobutyryl)lysine; alternate" evidence="10">
    <location>
        <position position="119"/>
    </location>
</feature>
<feature type="modified residue" description="N6-crotonyllysine; alternate" evidence="8">
    <location>
        <position position="119"/>
    </location>
</feature>
<feature type="modified residue" description="N6-glutaryllysine; alternate" evidence="3">
    <location>
        <position position="119"/>
    </location>
</feature>
<feature type="modified residue" description="N6-(beta-hydroxybutyryl)lysine; alternate" evidence="11">
    <location>
        <position position="120"/>
    </location>
</feature>
<feature type="modified residue" description="N6-crotonyllysine; alternate" evidence="3">
    <location>
        <position position="120"/>
    </location>
</feature>
<feature type="modified residue" description="N6-glutaryllysine; alternate" evidence="3">
    <location>
        <position position="120"/>
    </location>
</feature>
<feature type="modified residue" description="Phosphothreonine; by DCAF1" evidence="1">
    <location>
        <position position="121"/>
    </location>
</feature>
<feature type="modified residue" description="N6-(beta-hydroxybutyryl)lysine; alternate" evidence="11">
    <location>
        <position position="126"/>
    </location>
</feature>
<feature type="modified residue" description="N6-crotonyllysine; alternate" evidence="3">
    <location>
        <position position="126"/>
    </location>
</feature>
<feature type="modified residue" description="N6-glutaryllysine; alternate" evidence="3">
    <location>
        <position position="126"/>
    </location>
</feature>
<feature type="cross-link" description="Glycyl lysine isopeptide (Lys-Gly) (interchain with G-Cter in ubiquitin)" evidence="1">
    <location>
        <position position="14"/>
    </location>
</feature>
<feature type="cross-link" description="Glycyl lysine isopeptide (Lys-Gly) (interchain with G-Cter in ubiquitin)" evidence="1">
    <location>
        <position position="16"/>
    </location>
</feature>
<feature type="cross-link" description="Glycyl lysine isopeptide (Lys-Gly) (interchain with G-Cter in ubiquitin); alternate" evidence="5 6">
    <location>
        <position position="120"/>
    </location>
</feature>